<gene>
    <name evidence="1" type="primary">rpsC</name>
    <name type="ordered locus">SPG_0201</name>
</gene>
<keyword id="KW-0687">Ribonucleoprotein</keyword>
<keyword id="KW-0689">Ribosomal protein</keyword>
<keyword id="KW-0694">RNA-binding</keyword>
<keyword id="KW-0699">rRNA-binding</keyword>
<evidence type="ECO:0000255" key="1">
    <source>
        <dbReference type="HAMAP-Rule" id="MF_01309"/>
    </source>
</evidence>
<evidence type="ECO:0000305" key="2"/>
<protein>
    <recommendedName>
        <fullName evidence="1">Small ribosomal subunit protein uS3</fullName>
    </recommendedName>
    <alternativeName>
        <fullName evidence="2">30S ribosomal protein S3</fullName>
    </alternativeName>
</protein>
<feature type="chain" id="PRO_1000141021" description="Small ribosomal subunit protein uS3">
    <location>
        <begin position="1"/>
        <end position="217"/>
    </location>
</feature>
<feature type="domain" description="KH type-2" evidence="1">
    <location>
        <begin position="38"/>
        <end position="106"/>
    </location>
</feature>
<comment type="function">
    <text evidence="1">Binds the lower part of the 30S subunit head. Binds mRNA in the 70S ribosome, positioning it for translation.</text>
</comment>
<comment type="subunit">
    <text evidence="1">Part of the 30S ribosomal subunit. Forms a tight complex with proteins S10 and S14.</text>
</comment>
<comment type="similarity">
    <text evidence="1">Belongs to the universal ribosomal protein uS3 family.</text>
</comment>
<accession>B5E6G1</accession>
<reference key="1">
    <citation type="journal article" date="2001" name="Microb. Drug Resist.">
        <title>Annotated draft genomic sequence from a Streptococcus pneumoniae type 19F clinical isolate.</title>
        <authorList>
            <person name="Dopazo J."/>
            <person name="Mendoza A."/>
            <person name="Herrero J."/>
            <person name="Caldara F."/>
            <person name="Humbert Y."/>
            <person name="Friedli L."/>
            <person name="Guerrier M."/>
            <person name="Grand-Schenk E."/>
            <person name="Gandin C."/>
            <person name="de Francesco M."/>
            <person name="Polissi A."/>
            <person name="Buell G."/>
            <person name="Feger G."/>
            <person name="Garcia E."/>
            <person name="Peitsch M."/>
            <person name="Garcia-Bustos J.F."/>
        </authorList>
    </citation>
    <scope>NUCLEOTIDE SEQUENCE [LARGE SCALE GENOMIC DNA]</scope>
    <source>
        <strain>G54</strain>
    </source>
</reference>
<reference key="2">
    <citation type="submission" date="2008-03" db="EMBL/GenBank/DDBJ databases">
        <title>Pneumococcal beta glucoside metabolism investigated by whole genome comparison.</title>
        <authorList>
            <person name="Mulas L."/>
            <person name="Trappetti C."/>
            <person name="Hakenbeck R."/>
            <person name="Iannelli F."/>
            <person name="Pozzi G."/>
            <person name="Davidsen T.M."/>
            <person name="Tettelin H."/>
            <person name="Oggioni M."/>
        </authorList>
    </citation>
    <scope>NUCLEOTIDE SEQUENCE [LARGE SCALE GENOMIC DNA]</scope>
    <source>
        <strain>G54</strain>
    </source>
</reference>
<organism>
    <name type="scientific">Streptococcus pneumoniae serotype 19F (strain G54)</name>
    <dbReference type="NCBI Taxonomy" id="512566"/>
    <lineage>
        <taxon>Bacteria</taxon>
        <taxon>Bacillati</taxon>
        <taxon>Bacillota</taxon>
        <taxon>Bacilli</taxon>
        <taxon>Lactobacillales</taxon>
        <taxon>Streptococcaceae</taxon>
        <taxon>Streptococcus</taxon>
    </lineage>
</organism>
<dbReference type="EMBL" id="CP001015">
    <property type="protein sequence ID" value="ACF56863.1"/>
    <property type="molecule type" value="Genomic_DNA"/>
</dbReference>
<dbReference type="SMR" id="B5E6G1"/>
<dbReference type="KEGG" id="spx:SPG_0201"/>
<dbReference type="HOGENOM" id="CLU_058591_0_2_9"/>
<dbReference type="GO" id="GO:0022627">
    <property type="term" value="C:cytosolic small ribosomal subunit"/>
    <property type="evidence" value="ECO:0007669"/>
    <property type="project" value="TreeGrafter"/>
</dbReference>
<dbReference type="GO" id="GO:0003729">
    <property type="term" value="F:mRNA binding"/>
    <property type="evidence" value="ECO:0007669"/>
    <property type="project" value="UniProtKB-UniRule"/>
</dbReference>
<dbReference type="GO" id="GO:0019843">
    <property type="term" value="F:rRNA binding"/>
    <property type="evidence" value="ECO:0007669"/>
    <property type="project" value="UniProtKB-UniRule"/>
</dbReference>
<dbReference type="GO" id="GO:0003735">
    <property type="term" value="F:structural constituent of ribosome"/>
    <property type="evidence" value="ECO:0007669"/>
    <property type="project" value="InterPro"/>
</dbReference>
<dbReference type="GO" id="GO:0006412">
    <property type="term" value="P:translation"/>
    <property type="evidence" value="ECO:0007669"/>
    <property type="project" value="UniProtKB-UniRule"/>
</dbReference>
<dbReference type="CDD" id="cd02412">
    <property type="entry name" value="KH-II_30S_S3"/>
    <property type="match status" value="1"/>
</dbReference>
<dbReference type="FunFam" id="3.30.1140.32:FF:000001">
    <property type="entry name" value="30S ribosomal protein S3"/>
    <property type="match status" value="1"/>
</dbReference>
<dbReference type="FunFam" id="3.30.300.20:FF:000001">
    <property type="entry name" value="30S ribosomal protein S3"/>
    <property type="match status" value="1"/>
</dbReference>
<dbReference type="Gene3D" id="3.30.300.20">
    <property type="match status" value="1"/>
</dbReference>
<dbReference type="Gene3D" id="3.30.1140.32">
    <property type="entry name" value="Ribosomal protein S3, C-terminal domain"/>
    <property type="match status" value="1"/>
</dbReference>
<dbReference type="HAMAP" id="MF_01309_B">
    <property type="entry name" value="Ribosomal_uS3_B"/>
    <property type="match status" value="1"/>
</dbReference>
<dbReference type="InterPro" id="IPR004087">
    <property type="entry name" value="KH_dom"/>
</dbReference>
<dbReference type="InterPro" id="IPR015946">
    <property type="entry name" value="KH_dom-like_a/b"/>
</dbReference>
<dbReference type="InterPro" id="IPR004044">
    <property type="entry name" value="KH_dom_type_2"/>
</dbReference>
<dbReference type="InterPro" id="IPR009019">
    <property type="entry name" value="KH_sf_prok-type"/>
</dbReference>
<dbReference type="InterPro" id="IPR036419">
    <property type="entry name" value="Ribosomal_S3_C_sf"/>
</dbReference>
<dbReference type="InterPro" id="IPR005704">
    <property type="entry name" value="Ribosomal_uS3_bac-typ"/>
</dbReference>
<dbReference type="InterPro" id="IPR001351">
    <property type="entry name" value="Ribosomal_uS3_C"/>
</dbReference>
<dbReference type="InterPro" id="IPR018280">
    <property type="entry name" value="Ribosomal_uS3_CS"/>
</dbReference>
<dbReference type="NCBIfam" id="TIGR01009">
    <property type="entry name" value="rpsC_bact"/>
    <property type="match status" value="1"/>
</dbReference>
<dbReference type="PANTHER" id="PTHR11760">
    <property type="entry name" value="30S/40S RIBOSOMAL PROTEIN S3"/>
    <property type="match status" value="1"/>
</dbReference>
<dbReference type="PANTHER" id="PTHR11760:SF19">
    <property type="entry name" value="SMALL RIBOSOMAL SUBUNIT PROTEIN US3C"/>
    <property type="match status" value="1"/>
</dbReference>
<dbReference type="Pfam" id="PF07650">
    <property type="entry name" value="KH_2"/>
    <property type="match status" value="1"/>
</dbReference>
<dbReference type="Pfam" id="PF00189">
    <property type="entry name" value="Ribosomal_S3_C"/>
    <property type="match status" value="1"/>
</dbReference>
<dbReference type="SMART" id="SM00322">
    <property type="entry name" value="KH"/>
    <property type="match status" value="1"/>
</dbReference>
<dbReference type="SUPFAM" id="SSF54814">
    <property type="entry name" value="Prokaryotic type KH domain (KH-domain type II)"/>
    <property type="match status" value="1"/>
</dbReference>
<dbReference type="SUPFAM" id="SSF54821">
    <property type="entry name" value="Ribosomal protein S3 C-terminal domain"/>
    <property type="match status" value="1"/>
</dbReference>
<dbReference type="PROSITE" id="PS50823">
    <property type="entry name" value="KH_TYPE_2"/>
    <property type="match status" value="1"/>
</dbReference>
<dbReference type="PROSITE" id="PS00548">
    <property type="entry name" value="RIBOSOMAL_S3"/>
    <property type="match status" value="1"/>
</dbReference>
<name>RS3_STRP4</name>
<proteinExistence type="inferred from homology"/>
<sequence>MGQKVHPIGMRVGIIRDWDAKWYAEKEYADYLHEDLAIRKFVQKELADAAVSTIEIERAVNKVNVSLHTAKPGMVIGKGGANVDALRAKLNKLTGKQVHINIIEIKQPDLDAHLVGEGIARQLEQRVAFRRAQKQAIQRAMRAGAKGIKTQVSGRLNGADIARAEGYSEGTVPLHTLRADIDYAWEEADTTYGKLGVKVWIYRGEVLPARKNTKGGK</sequence>